<evidence type="ECO:0000255" key="1">
    <source>
        <dbReference type="HAMAP-Rule" id="MF_00558"/>
    </source>
</evidence>
<protein>
    <recommendedName>
        <fullName evidence="1">Succinate--CoA ligase [ADP-forming] subunit beta</fullName>
        <ecNumber evidence="1">6.2.1.5</ecNumber>
    </recommendedName>
    <alternativeName>
        <fullName evidence="1">Succinyl-CoA synthetase subunit beta</fullName>
        <shortName evidence="1">SCS-beta</shortName>
    </alternativeName>
</protein>
<proteinExistence type="inferred from homology"/>
<name>SUCC_RHIJ3</name>
<reference key="1">
    <citation type="journal article" date="2006" name="Genome Biol.">
        <title>The genome of Rhizobium leguminosarum has recognizable core and accessory components.</title>
        <authorList>
            <person name="Young J.P.W."/>
            <person name="Crossman L.C."/>
            <person name="Johnston A.W.B."/>
            <person name="Thomson N.R."/>
            <person name="Ghazoui Z.F."/>
            <person name="Hull K.H."/>
            <person name="Wexler M."/>
            <person name="Curson A.R.J."/>
            <person name="Todd J.D."/>
            <person name="Poole P.S."/>
            <person name="Mauchline T.H."/>
            <person name="East A.K."/>
            <person name="Quail M.A."/>
            <person name="Churcher C."/>
            <person name="Arrowsmith C."/>
            <person name="Cherevach I."/>
            <person name="Chillingworth T."/>
            <person name="Clarke K."/>
            <person name="Cronin A."/>
            <person name="Davis P."/>
            <person name="Fraser A."/>
            <person name="Hance Z."/>
            <person name="Hauser H."/>
            <person name="Jagels K."/>
            <person name="Moule S."/>
            <person name="Mungall K."/>
            <person name="Norbertczak H."/>
            <person name="Rabbinowitsch E."/>
            <person name="Sanders M."/>
            <person name="Simmonds M."/>
            <person name="Whitehead S."/>
            <person name="Parkhill J."/>
        </authorList>
    </citation>
    <scope>NUCLEOTIDE SEQUENCE [LARGE SCALE GENOMIC DNA]</scope>
    <source>
        <strain>DSM 114642 / LMG 32736 / 3841</strain>
    </source>
</reference>
<gene>
    <name evidence="1" type="primary">sucC</name>
    <name type="ordered locus">RL4438</name>
</gene>
<feature type="chain" id="PRO_1000082187" description="Succinate--CoA ligase [ADP-forming] subunit beta">
    <location>
        <begin position="1"/>
        <end position="397"/>
    </location>
</feature>
<feature type="domain" description="ATP-grasp" evidence="1">
    <location>
        <begin position="9"/>
        <end position="254"/>
    </location>
</feature>
<feature type="binding site" evidence="1">
    <location>
        <position position="46"/>
    </location>
    <ligand>
        <name>ATP</name>
        <dbReference type="ChEBI" id="CHEBI:30616"/>
    </ligand>
</feature>
<feature type="binding site" evidence="1">
    <location>
        <begin position="53"/>
        <end position="55"/>
    </location>
    <ligand>
        <name>ATP</name>
        <dbReference type="ChEBI" id="CHEBI:30616"/>
    </ligand>
</feature>
<feature type="binding site" evidence="1">
    <location>
        <position position="109"/>
    </location>
    <ligand>
        <name>ATP</name>
        <dbReference type="ChEBI" id="CHEBI:30616"/>
    </ligand>
</feature>
<feature type="binding site" evidence="1">
    <location>
        <position position="112"/>
    </location>
    <ligand>
        <name>ATP</name>
        <dbReference type="ChEBI" id="CHEBI:30616"/>
    </ligand>
</feature>
<feature type="binding site" evidence="1">
    <location>
        <position position="117"/>
    </location>
    <ligand>
        <name>ATP</name>
        <dbReference type="ChEBI" id="CHEBI:30616"/>
    </ligand>
</feature>
<feature type="binding site" evidence="1">
    <location>
        <position position="209"/>
    </location>
    <ligand>
        <name>Mg(2+)</name>
        <dbReference type="ChEBI" id="CHEBI:18420"/>
    </ligand>
</feature>
<feature type="binding site" evidence="1">
    <location>
        <position position="223"/>
    </location>
    <ligand>
        <name>Mg(2+)</name>
        <dbReference type="ChEBI" id="CHEBI:18420"/>
    </ligand>
</feature>
<feature type="binding site" evidence="1">
    <location>
        <position position="274"/>
    </location>
    <ligand>
        <name>substrate</name>
        <note>ligand shared with subunit alpha</note>
    </ligand>
</feature>
<feature type="binding site" evidence="1">
    <location>
        <begin position="331"/>
        <end position="333"/>
    </location>
    <ligand>
        <name>substrate</name>
        <note>ligand shared with subunit alpha</note>
    </ligand>
</feature>
<keyword id="KW-0067">ATP-binding</keyword>
<keyword id="KW-0436">Ligase</keyword>
<keyword id="KW-0460">Magnesium</keyword>
<keyword id="KW-0479">Metal-binding</keyword>
<keyword id="KW-0547">Nucleotide-binding</keyword>
<keyword id="KW-0816">Tricarboxylic acid cycle</keyword>
<sequence>MNIHEYQAKALLKGYGAPVAEGVAILKVEEAEAAAKSLPGPLYVVKSQIHAGGRGKGKFKELSPEAKGGVRLAKSIDEVVAHAKEMLGNTLVTAQTGEAGKQVNRLYIEDGADIARELYCSLLVDRSVGRVAFVVSTEGGMDIEAVAHDTPEKIQTIAIDPEAGVTAADVAAISKAFELEGAAAEDAKTLFPMLYKAFGEKDMALLEINPLIVMKDGHLRVLDAKMSFDGNALFRHDDVKVLRDETEEDAKEIEASKWDLAYVALDGNIGCMVNGAGLAMATMDIIKLYGKEPANFCDVGGGAGKEKVAAAFKIITADPKVEGILVNIFGGIMKCDVIAEGVIAAVKEVGLKVPLVVRLEGTNVELGKKILNESGLAITAADDLDDAAKKIVAAING</sequence>
<comment type="function">
    <text evidence="1">Succinyl-CoA synthetase functions in the citric acid cycle (TCA), coupling the hydrolysis of succinyl-CoA to the synthesis of either ATP or GTP and thus represents the only step of substrate-level phosphorylation in the TCA. The beta subunit provides nucleotide specificity of the enzyme and binds the substrate succinate, while the binding sites for coenzyme A and phosphate are found in the alpha subunit.</text>
</comment>
<comment type="catalytic activity">
    <reaction evidence="1">
        <text>succinate + ATP + CoA = succinyl-CoA + ADP + phosphate</text>
        <dbReference type="Rhea" id="RHEA:17661"/>
        <dbReference type="ChEBI" id="CHEBI:30031"/>
        <dbReference type="ChEBI" id="CHEBI:30616"/>
        <dbReference type="ChEBI" id="CHEBI:43474"/>
        <dbReference type="ChEBI" id="CHEBI:57287"/>
        <dbReference type="ChEBI" id="CHEBI:57292"/>
        <dbReference type="ChEBI" id="CHEBI:456216"/>
        <dbReference type="EC" id="6.2.1.5"/>
    </reaction>
    <physiologicalReaction direction="right-to-left" evidence="1">
        <dbReference type="Rhea" id="RHEA:17663"/>
    </physiologicalReaction>
</comment>
<comment type="catalytic activity">
    <reaction evidence="1">
        <text>GTP + succinate + CoA = succinyl-CoA + GDP + phosphate</text>
        <dbReference type="Rhea" id="RHEA:22120"/>
        <dbReference type="ChEBI" id="CHEBI:30031"/>
        <dbReference type="ChEBI" id="CHEBI:37565"/>
        <dbReference type="ChEBI" id="CHEBI:43474"/>
        <dbReference type="ChEBI" id="CHEBI:57287"/>
        <dbReference type="ChEBI" id="CHEBI:57292"/>
        <dbReference type="ChEBI" id="CHEBI:58189"/>
    </reaction>
    <physiologicalReaction direction="right-to-left" evidence="1">
        <dbReference type="Rhea" id="RHEA:22122"/>
    </physiologicalReaction>
</comment>
<comment type="cofactor">
    <cofactor evidence="1">
        <name>Mg(2+)</name>
        <dbReference type="ChEBI" id="CHEBI:18420"/>
    </cofactor>
    <text evidence="1">Binds 1 Mg(2+) ion per subunit.</text>
</comment>
<comment type="pathway">
    <text evidence="1">Carbohydrate metabolism; tricarboxylic acid cycle; succinate from succinyl-CoA (ligase route): step 1/1.</text>
</comment>
<comment type="subunit">
    <text evidence="1">Heterotetramer of two alpha and two beta subunits.</text>
</comment>
<comment type="similarity">
    <text evidence="1">Belongs to the succinate/malate CoA ligase beta subunit family.</text>
</comment>
<organism>
    <name type="scientific">Rhizobium johnstonii (strain DSM 114642 / LMG 32736 / 3841)</name>
    <name type="common">Rhizobium leguminosarum bv. viciae</name>
    <dbReference type="NCBI Taxonomy" id="216596"/>
    <lineage>
        <taxon>Bacteria</taxon>
        <taxon>Pseudomonadati</taxon>
        <taxon>Pseudomonadota</taxon>
        <taxon>Alphaproteobacteria</taxon>
        <taxon>Hyphomicrobiales</taxon>
        <taxon>Rhizobiaceae</taxon>
        <taxon>Rhizobium/Agrobacterium group</taxon>
        <taxon>Rhizobium</taxon>
        <taxon>Rhizobium johnstonii</taxon>
    </lineage>
</organism>
<accession>Q1MAW1</accession>
<dbReference type="EC" id="6.2.1.5" evidence="1"/>
<dbReference type="EMBL" id="AM236080">
    <property type="protein sequence ID" value="CAK09924.1"/>
    <property type="molecule type" value="Genomic_DNA"/>
</dbReference>
<dbReference type="RefSeq" id="WP_011653813.1">
    <property type="nucleotide sequence ID" value="NC_008380.1"/>
</dbReference>
<dbReference type="SMR" id="Q1MAW1"/>
<dbReference type="EnsemblBacteria" id="CAK09924">
    <property type="protein sequence ID" value="CAK09924"/>
    <property type="gene ID" value="RL4438"/>
</dbReference>
<dbReference type="KEGG" id="rle:RL4438"/>
<dbReference type="eggNOG" id="COG0045">
    <property type="taxonomic scope" value="Bacteria"/>
</dbReference>
<dbReference type="HOGENOM" id="CLU_037430_0_2_5"/>
<dbReference type="UniPathway" id="UPA00223">
    <property type="reaction ID" value="UER00999"/>
</dbReference>
<dbReference type="Proteomes" id="UP000006575">
    <property type="component" value="Chromosome"/>
</dbReference>
<dbReference type="GO" id="GO:0005829">
    <property type="term" value="C:cytosol"/>
    <property type="evidence" value="ECO:0007669"/>
    <property type="project" value="TreeGrafter"/>
</dbReference>
<dbReference type="GO" id="GO:0042709">
    <property type="term" value="C:succinate-CoA ligase complex"/>
    <property type="evidence" value="ECO:0007669"/>
    <property type="project" value="TreeGrafter"/>
</dbReference>
<dbReference type="GO" id="GO:0005524">
    <property type="term" value="F:ATP binding"/>
    <property type="evidence" value="ECO:0007669"/>
    <property type="project" value="UniProtKB-UniRule"/>
</dbReference>
<dbReference type="GO" id="GO:0000287">
    <property type="term" value="F:magnesium ion binding"/>
    <property type="evidence" value="ECO:0007669"/>
    <property type="project" value="UniProtKB-UniRule"/>
</dbReference>
<dbReference type="GO" id="GO:0004775">
    <property type="term" value="F:succinate-CoA ligase (ADP-forming) activity"/>
    <property type="evidence" value="ECO:0007669"/>
    <property type="project" value="UniProtKB-UniRule"/>
</dbReference>
<dbReference type="GO" id="GO:0004776">
    <property type="term" value="F:succinate-CoA ligase (GDP-forming) activity"/>
    <property type="evidence" value="ECO:0007669"/>
    <property type="project" value="RHEA"/>
</dbReference>
<dbReference type="GO" id="GO:0006104">
    <property type="term" value="P:succinyl-CoA metabolic process"/>
    <property type="evidence" value="ECO:0007669"/>
    <property type="project" value="TreeGrafter"/>
</dbReference>
<dbReference type="GO" id="GO:0006099">
    <property type="term" value="P:tricarboxylic acid cycle"/>
    <property type="evidence" value="ECO:0007669"/>
    <property type="project" value="UniProtKB-UniRule"/>
</dbReference>
<dbReference type="FunFam" id="3.30.1490.20:FF:000002">
    <property type="entry name" value="Succinate--CoA ligase [ADP-forming] subunit beta"/>
    <property type="match status" value="1"/>
</dbReference>
<dbReference type="FunFam" id="3.30.470.20:FF:000002">
    <property type="entry name" value="Succinate--CoA ligase [ADP-forming] subunit beta"/>
    <property type="match status" value="1"/>
</dbReference>
<dbReference type="FunFam" id="3.40.50.261:FF:000001">
    <property type="entry name" value="Succinate--CoA ligase [ADP-forming] subunit beta"/>
    <property type="match status" value="1"/>
</dbReference>
<dbReference type="Gene3D" id="3.30.1490.20">
    <property type="entry name" value="ATP-grasp fold, A domain"/>
    <property type="match status" value="1"/>
</dbReference>
<dbReference type="Gene3D" id="3.30.470.20">
    <property type="entry name" value="ATP-grasp fold, B domain"/>
    <property type="match status" value="1"/>
</dbReference>
<dbReference type="Gene3D" id="3.40.50.261">
    <property type="entry name" value="Succinyl-CoA synthetase domains"/>
    <property type="match status" value="1"/>
</dbReference>
<dbReference type="HAMAP" id="MF_00558">
    <property type="entry name" value="Succ_CoA_beta"/>
    <property type="match status" value="1"/>
</dbReference>
<dbReference type="InterPro" id="IPR011761">
    <property type="entry name" value="ATP-grasp"/>
</dbReference>
<dbReference type="InterPro" id="IPR013650">
    <property type="entry name" value="ATP-grasp_succ-CoA_synth-type"/>
</dbReference>
<dbReference type="InterPro" id="IPR013815">
    <property type="entry name" value="ATP_grasp_subdomain_1"/>
</dbReference>
<dbReference type="InterPro" id="IPR017866">
    <property type="entry name" value="Succ-CoA_synthase_bsu_CS"/>
</dbReference>
<dbReference type="InterPro" id="IPR005811">
    <property type="entry name" value="SUCC_ACL_C"/>
</dbReference>
<dbReference type="InterPro" id="IPR005809">
    <property type="entry name" value="Succ_CoA_ligase-like_bsu"/>
</dbReference>
<dbReference type="InterPro" id="IPR016102">
    <property type="entry name" value="Succinyl-CoA_synth-like"/>
</dbReference>
<dbReference type="NCBIfam" id="NF001913">
    <property type="entry name" value="PRK00696.1"/>
    <property type="match status" value="1"/>
</dbReference>
<dbReference type="NCBIfam" id="TIGR01016">
    <property type="entry name" value="sucCoAbeta"/>
    <property type="match status" value="1"/>
</dbReference>
<dbReference type="PANTHER" id="PTHR11815:SF10">
    <property type="entry name" value="SUCCINATE--COA LIGASE [GDP-FORMING] SUBUNIT BETA, MITOCHONDRIAL"/>
    <property type="match status" value="1"/>
</dbReference>
<dbReference type="PANTHER" id="PTHR11815">
    <property type="entry name" value="SUCCINYL-COA SYNTHETASE BETA CHAIN"/>
    <property type="match status" value="1"/>
</dbReference>
<dbReference type="Pfam" id="PF08442">
    <property type="entry name" value="ATP-grasp_2"/>
    <property type="match status" value="1"/>
</dbReference>
<dbReference type="Pfam" id="PF00549">
    <property type="entry name" value="Ligase_CoA"/>
    <property type="match status" value="1"/>
</dbReference>
<dbReference type="PIRSF" id="PIRSF001554">
    <property type="entry name" value="SucCS_beta"/>
    <property type="match status" value="1"/>
</dbReference>
<dbReference type="SUPFAM" id="SSF56059">
    <property type="entry name" value="Glutathione synthetase ATP-binding domain-like"/>
    <property type="match status" value="1"/>
</dbReference>
<dbReference type="SUPFAM" id="SSF52210">
    <property type="entry name" value="Succinyl-CoA synthetase domains"/>
    <property type="match status" value="1"/>
</dbReference>
<dbReference type="PROSITE" id="PS50975">
    <property type="entry name" value="ATP_GRASP"/>
    <property type="match status" value="1"/>
</dbReference>
<dbReference type="PROSITE" id="PS01217">
    <property type="entry name" value="SUCCINYL_COA_LIG_3"/>
    <property type="match status" value="1"/>
</dbReference>